<keyword id="KW-0378">Hydrolase</keyword>
<keyword id="KW-0546">Nucleotide metabolism</keyword>
<keyword id="KW-0547">Nucleotide-binding</keyword>
<proteinExistence type="inferred from homology"/>
<sequence>MAIMSDKWIKEAVINHSMIRPFAEKQVRVHNKEKIISYGLSSYGYDARVSNEFKIFTNINSTTVDPKNFSEYNLVDREVDVCIIPPNSFALGRTIEYFKIPRDVLVICVGKSTYARCGIIVNVTPLEPEWEGHVTLEFSNTTPLPAKIYANEGACQFLFLKSDQICDTSYADRQGKYMKQVGVTLPLT</sequence>
<reference key="1">
    <citation type="submission" date="2007-09" db="EMBL/GenBank/DDBJ databases">
        <title>Complete genome sequence of Rickettsia rickettsii.</title>
        <authorList>
            <person name="Madan A."/>
            <person name="Fahey J."/>
            <person name="Helton E."/>
            <person name="Ketteman M."/>
            <person name="Madan A."/>
            <person name="Rodrigues S."/>
            <person name="Sanchez A."/>
            <person name="Dasch G."/>
            <person name="Eremeeva M."/>
        </authorList>
    </citation>
    <scope>NUCLEOTIDE SEQUENCE [LARGE SCALE GENOMIC DNA]</scope>
    <source>
        <strain>Sheila Smith</strain>
    </source>
</reference>
<name>DCD_RICRS</name>
<protein>
    <recommendedName>
        <fullName evidence="1">dCTP deaminase</fullName>
        <ecNumber evidence="1">3.5.4.13</ecNumber>
    </recommendedName>
    <alternativeName>
        <fullName evidence="1">Deoxycytidine triphosphate deaminase</fullName>
    </alternativeName>
</protein>
<dbReference type="EC" id="3.5.4.13" evidence="1"/>
<dbReference type="EMBL" id="CP000848">
    <property type="protein sequence ID" value="ABV75708.1"/>
    <property type="molecule type" value="Genomic_DNA"/>
</dbReference>
<dbReference type="RefSeq" id="WP_004996797.1">
    <property type="nucleotide sequence ID" value="NC_009882.1"/>
</dbReference>
<dbReference type="SMR" id="A8GQN3"/>
<dbReference type="GeneID" id="79936898"/>
<dbReference type="GeneID" id="95361829"/>
<dbReference type="KEGG" id="rri:A1G_00610"/>
<dbReference type="HOGENOM" id="CLU_087476_4_0_5"/>
<dbReference type="UniPathway" id="UPA00610">
    <property type="reaction ID" value="UER00665"/>
</dbReference>
<dbReference type="Proteomes" id="UP000006832">
    <property type="component" value="Chromosome"/>
</dbReference>
<dbReference type="GO" id="GO:0008829">
    <property type="term" value="F:dCTP deaminase activity"/>
    <property type="evidence" value="ECO:0007669"/>
    <property type="project" value="UniProtKB-UniRule"/>
</dbReference>
<dbReference type="GO" id="GO:0000166">
    <property type="term" value="F:nucleotide binding"/>
    <property type="evidence" value="ECO:0007669"/>
    <property type="project" value="UniProtKB-KW"/>
</dbReference>
<dbReference type="GO" id="GO:0006226">
    <property type="term" value="P:dUMP biosynthetic process"/>
    <property type="evidence" value="ECO:0007669"/>
    <property type="project" value="UniProtKB-UniPathway"/>
</dbReference>
<dbReference type="GO" id="GO:0006229">
    <property type="term" value="P:dUTP biosynthetic process"/>
    <property type="evidence" value="ECO:0007669"/>
    <property type="project" value="UniProtKB-UniRule"/>
</dbReference>
<dbReference type="CDD" id="cd07557">
    <property type="entry name" value="trimeric_dUTPase"/>
    <property type="match status" value="1"/>
</dbReference>
<dbReference type="FunFam" id="2.70.40.10:FF:000001">
    <property type="entry name" value="dCTP deaminase"/>
    <property type="match status" value="1"/>
</dbReference>
<dbReference type="Gene3D" id="2.70.40.10">
    <property type="match status" value="1"/>
</dbReference>
<dbReference type="HAMAP" id="MF_00146">
    <property type="entry name" value="dCTP_deaminase"/>
    <property type="match status" value="1"/>
</dbReference>
<dbReference type="InterPro" id="IPR011962">
    <property type="entry name" value="dCTP_deaminase"/>
</dbReference>
<dbReference type="InterPro" id="IPR036157">
    <property type="entry name" value="dUTPase-like_sf"/>
</dbReference>
<dbReference type="InterPro" id="IPR033704">
    <property type="entry name" value="dUTPase_trimeric"/>
</dbReference>
<dbReference type="NCBIfam" id="TIGR02274">
    <property type="entry name" value="dCTP_deam"/>
    <property type="match status" value="1"/>
</dbReference>
<dbReference type="PANTHER" id="PTHR42680">
    <property type="entry name" value="DCTP DEAMINASE"/>
    <property type="match status" value="1"/>
</dbReference>
<dbReference type="PANTHER" id="PTHR42680:SF3">
    <property type="entry name" value="DCTP DEAMINASE"/>
    <property type="match status" value="1"/>
</dbReference>
<dbReference type="Pfam" id="PF22769">
    <property type="entry name" value="DCD"/>
    <property type="match status" value="1"/>
</dbReference>
<dbReference type="SUPFAM" id="SSF51283">
    <property type="entry name" value="dUTPase-like"/>
    <property type="match status" value="1"/>
</dbReference>
<comment type="function">
    <text evidence="1">Catalyzes the deamination of dCTP to dUTP.</text>
</comment>
<comment type="catalytic activity">
    <reaction evidence="1">
        <text>dCTP + H2O + H(+) = dUTP + NH4(+)</text>
        <dbReference type="Rhea" id="RHEA:22680"/>
        <dbReference type="ChEBI" id="CHEBI:15377"/>
        <dbReference type="ChEBI" id="CHEBI:15378"/>
        <dbReference type="ChEBI" id="CHEBI:28938"/>
        <dbReference type="ChEBI" id="CHEBI:61481"/>
        <dbReference type="ChEBI" id="CHEBI:61555"/>
        <dbReference type="EC" id="3.5.4.13"/>
    </reaction>
</comment>
<comment type="pathway">
    <text evidence="1">Pyrimidine metabolism; dUMP biosynthesis; dUMP from dCTP (dUTP route): step 1/2.</text>
</comment>
<comment type="subunit">
    <text evidence="1">Homotrimer.</text>
</comment>
<comment type="similarity">
    <text evidence="1">Belongs to the dCTP deaminase family.</text>
</comment>
<evidence type="ECO:0000255" key="1">
    <source>
        <dbReference type="HAMAP-Rule" id="MF_00146"/>
    </source>
</evidence>
<feature type="chain" id="PRO_1000009802" description="dCTP deaminase">
    <location>
        <begin position="1"/>
        <end position="188"/>
    </location>
</feature>
<feature type="active site" description="Proton donor/acceptor" evidence="1">
    <location>
        <position position="137"/>
    </location>
</feature>
<feature type="binding site" evidence="1">
    <location>
        <begin position="111"/>
        <end position="116"/>
    </location>
    <ligand>
        <name>dCTP</name>
        <dbReference type="ChEBI" id="CHEBI:61481"/>
    </ligand>
</feature>
<feature type="binding site" evidence="1">
    <location>
        <begin position="135"/>
        <end position="137"/>
    </location>
    <ligand>
        <name>dCTP</name>
        <dbReference type="ChEBI" id="CHEBI:61481"/>
    </ligand>
</feature>
<feature type="binding site" evidence="1">
    <location>
        <position position="156"/>
    </location>
    <ligand>
        <name>dCTP</name>
        <dbReference type="ChEBI" id="CHEBI:61481"/>
    </ligand>
</feature>
<feature type="binding site" evidence="1">
    <location>
        <position position="170"/>
    </location>
    <ligand>
        <name>dCTP</name>
        <dbReference type="ChEBI" id="CHEBI:61481"/>
    </ligand>
</feature>
<feature type="binding site" evidence="1">
    <location>
        <position position="179"/>
    </location>
    <ligand>
        <name>dCTP</name>
        <dbReference type="ChEBI" id="CHEBI:61481"/>
    </ligand>
</feature>
<feature type="binding site" evidence="1">
    <location>
        <position position="180"/>
    </location>
    <ligand>
        <name>dCTP</name>
        <dbReference type="ChEBI" id="CHEBI:61481"/>
    </ligand>
</feature>
<accession>A8GQN3</accession>
<gene>
    <name evidence="1" type="primary">dcd</name>
    <name type="ordered locus">A1G_00610</name>
</gene>
<organism>
    <name type="scientific">Rickettsia rickettsii (strain Sheila Smith)</name>
    <dbReference type="NCBI Taxonomy" id="392021"/>
    <lineage>
        <taxon>Bacteria</taxon>
        <taxon>Pseudomonadati</taxon>
        <taxon>Pseudomonadota</taxon>
        <taxon>Alphaproteobacteria</taxon>
        <taxon>Rickettsiales</taxon>
        <taxon>Rickettsiaceae</taxon>
        <taxon>Rickettsieae</taxon>
        <taxon>Rickettsia</taxon>
        <taxon>spotted fever group</taxon>
    </lineage>
</organism>